<feature type="chain" id="PRO_1000118605" description="4-hydroxy-3-methylbut-2-enyl diphosphate reductase">
    <location>
        <begin position="1"/>
        <end position="283"/>
    </location>
</feature>
<feature type="active site" description="Proton donor" evidence="1">
    <location>
        <position position="124"/>
    </location>
</feature>
<feature type="binding site" evidence="1">
    <location>
        <position position="12"/>
    </location>
    <ligand>
        <name>[4Fe-4S] cluster</name>
        <dbReference type="ChEBI" id="CHEBI:49883"/>
    </ligand>
</feature>
<feature type="binding site" evidence="1">
    <location>
        <position position="40"/>
    </location>
    <ligand>
        <name>(2E)-4-hydroxy-3-methylbut-2-enyl diphosphate</name>
        <dbReference type="ChEBI" id="CHEBI:128753"/>
    </ligand>
</feature>
<feature type="binding site" evidence="1">
    <location>
        <position position="40"/>
    </location>
    <ligand>
        <name>dimethylallyl diphosphate</name>
        <dbReference type="ChEBI" id="CHEBI:57623"/>
    </ligand>
</feature>
<feature type="binding site" evidence="1">
    <location>
        <position position="40"/>
    </location>
    <ligand>
        <name>isopentenyl diphosphate</name>
        <dbReference type="ChEBI" id="CHEBI:128769"/>
    </ligand>
</feature>
<feature type="binding site" evidence="1">
    <location>
        <position position="72"/>
    </location>
    <ligand>
        <name>(2E)-4-hydroxy-3-methylbut-2-enyl diphosphate</name>
        <dbReference type="ChEBI" id="CHEBI:128753"/>
    </ligand>
</feature>
<feature type="binding site" evidence="1">
    <location>
        <position position="72"/>
    </location>
    <ligand>
        <name>dimethylallyl diphosphate</name>
        <dbReference type="ChEBI" id="CHEBI:57623"/>
    </ligand>
</feature>
<feature type="binding site" evidence="1">
    <location>
        <position position="72"/>
    </location>
    <ligand>
        <name>isopentenyl diphosphate</name>
        <dbReference type="ChEBI" id="CHEBI:128769"/>
    </ligand>
</feature>
<feature type="binding site" evidence="1">
    <location>
        <position position="94"/>
    </location>
    <ligand>
        <name>[4Fe-4S] cluster</name>
        <dbReference type="ChEBI" id="CHEBI:49883"/>
    </ligand>
</feature>
<feature type="binding site" evidence="1">
    <location>
        <position position="122"/>
    </location>
    <ligand>
        <name>(2E)-4-hydroxy-3-methylbut-2-enyl diphosphate</name>
        <dbReference type="ChEBI" id="CHEBI:128753"/>
    </ligand>
</feature>
<feature type="binding site" evidence="1">
    <location>
        <position position="122"/>
    </location>
    <ligand>
        <name>dimethylallyl diphosphate</name>
        <dbReference type="ChEBI" id="CHEBI:57623"/>
    </ligand>
</feature>
<feature type="binding site" evidence="1">
    <location>
        <position position="122"/>
    </location>
    <ligand>
        <name>isopentenyl diphosphate</name>
        <dbReference type="ChEBI" id="CHEBI:128769"/>
    </ligand>
</feature>
<feature type="binding site" evidence="1">
    <location>
        <position position="160"/>
    </location>
    <ligand>
        <name>(2E)-4-hydroxy-3-methylbut-2-enyl diphosphate</name>
        <dbReference type="ChEBI" id="CHEBI:128753"/>
    </ligand>
</feature>
<feature type="binding site" evidence="1">
    <location>
        <position position="188"/>
    </location>
    <ligand>
        <name>[4Fe-4S] cluster</name>
        <dbReference type="ChEBI" id="CHEBI:49883"/>
    </ligand>
</feature>
<feature type="binding site" evidence="1">
    <location>
        <position position="216"/>
    </location>
    <ligand>
        <name>(2E)-4-hydroxy-3-methylbut-2-enyl diphosphate</name>
        <dbReference type="ChEBI" id="CHEBI:128753"/>
    </ligand>
</feature>
<feature type="binding site" evidence="1">
    <location>
        <position position="216"/>
    </location>
    <ligand>
        <name>dimethylallyl diphosphate</name>
        <dbReference type="ChEBI" id="CHEBI:57623"/>
    </ligand>
</feature>
<feature type="binding site" evidence="1">
    <location>
        <position position="216"/>
    </location>
    <ligand>
        <name>isopentenyl diphosphate</name>
        <dbReference type="ChEBI" id="CHEBI:128769"/>
    </ligand>
</feature>
<feature type="binding site" evidence="1">
    <location>
        <position position="218"/>
    </location>
    <ligand>
        <name>(2E)-4-hydroxy-3-methylbut-2-enyl diphosphate</name>
        <dbReference type="ChEBI" id="CHEBI:128753"/>
    </ligand>
</feature>
<feature type="binding site" evidence="1">
    <location>
        <position position="218"/>
    </location>
    <ligand>
        <name>dimethylallyl diphosphate</name>
        <dbReference type="ChEBI" id="CHEBI:57623"/>
    </ligand>
</feature>
<feature type="binding site" evidence="1">
    <location>
        <position position="218"/>
    </location>
    <ligand>
        <name>isopentenyl diphosphate</name>
        <dbReference type="ChEBI" id="CHEBI:128769"/>
    </ligand>
</feature>
<feature type="binding site" evidence="1">
    <location>
        <position position="259"/>
    </location>
    <ligand>
        <name>(2E)-4-hydroxy-3-methylbut-2-enyl diphosphate</name>
        <dbReference type="ChEBI" id="CHEBI:128753"/>
    </ligand>
</feature>
<feature type="binding site" evidence="1">
    <location>
        <position position="259"/>
    </location>
    <ligand>
        <name>dimethylallyl diphosphate</name>
        <dbReference type="ChEBI" id="CHEBI:57623"/>
    </ligand>
</feature>
<feature type="binding site" evidence="1">
    <location>
        <position position="259"/>
    </location>
    <ligand>
        <name>isopentenyl diphosphate</name>
        <dbReference type="ChEBI" id="CHEBI:128769"/>
    </ligand>
</feature>
<dbReference type="EC" id="1.17.7.4" evidence="1"/>
<dbReference type="EMBL" id="CP001251">
    <property type="protein sequence ID" value="ACK42437.1"/>
    <property type="molecule type" value="Genomic_DNA"/>
</dbReference>
<dbReference type="RefSeq" id="WP_012583519.1">
    <property type="nucleotide sequence ID" value="NC_011661.1"/>
</dbReference>
<dbReference type="RefSeq" id="YP_002353051.1">
    <property type="nucleotide sequence ID" value="NC_011661.1"/>
</dbReference>
<dbReference type="SMR" id="B8E2T7"/>
<dbReference type="FunCoup" id="B8E2T7">
    <property type="interactions" value="269"/>
</dbReference>
<dbReference type="STRING" id="515635.Dtur_1158"/>
<dbReference type="EnsemblBacteria" id="ACK42437">
    <property type="protein sequence ID" value="ACK42437"/>
    <property type="gene ID" value="Dtur_1158"/>
</dbReference>
<dbReference type="KEGG" id="dtu:Dtur_1158"/>
<dbReference type="PATRIC" id="fig|515635.4.peg.1195"/>
<dbReference type="eggNOG" id="COG0761">
    <property type="taxonomic scope" value="Bacteria"/>
</dbReference>
<dbReference type="HOGENOM" id="CLU_027486_0_1_0"/>
<dbReference type="InParanoid" id="B8E2T7"/>
<dbReference type="OrthoDB" id="9804077at2"/>
<dbReference type="UniPathway" id="UPA00056">
    <property type="reaction ID" value="UER00097"/>
</dbReference>
<dbReference type="UniPathway" id="UPA00059">
    <property type="reaction ID" value="UER00105"/>
</dbReference>
<dbReference type="Proteomes" id="UP000007719">
    <property type="component" value="Chromosome"/>
</dbReference>
<dbReference type="GO" id="GO:0005829">
    <property type="term" value="C:cytosol"/>
    <property type="evidence" value="ECO:0000318"/>
    <property type="project" value="GO_Central"/>
</dbReference>
<dbReference type="GO" id="GO:0051539">
    <property type="term" value="F:4 iron, 4 sulfur cluster binding"/>
    <property type="evidence" value="ECO:0007669"/>
    <property type="project" value="UniProtKB-UniRule"/>
</dbReference>
<dbReference type="GO" id="GO:0051745">
    <property type="term" value="F:4-hydroxy-3-methylbut-2-enyl diphosphate reductase activity"/>
    <property type="evidence" value="ECO:0000318"/>
    <property type="project" value="GO_Central"/>
</dbReference>
<dbReference type="GO" id="GO:0046872">
    <property type="term" value="F:metal ion binding"/>
    <property type="evidence" value="ECO:0007669"/>
    <property type="project" value="UniProtKB-KW"/>
</dbReference>
<dbReference type="GO" id="GO:0050992">
    <property type="term" value="P:dimethylallyl diphosphate biosynthetic process"/>
    <property type="evidence" value="ECO:0007669"/>
    <property type="project" value="UniProtKB-UniRule"/>
</dbReference>
<dbReference type="GO" id="GO:0019288">
    <property type="term" value="P:isopentenyl diphosphate biosynthetic process, methylerythritol 4-phosphate pathway"/>
    <property type="evidence" value="ECO:0000318"/>
    <property type="project" value="GO_Central"/>
</dbReference>
<dbReference type="GO" id="GO:0016114">
    <property type="term" value="P:terpenoid biosynthetic process"/>
    <property type="evidence" value="ECO:0007669"/>
    <property type="project" value="UniProtKB-UniRule"/>
</dbReference>
<dbReference type="CDD" id="cd13944">
    <property type="entry name" value="lytB_ispH"/>
    <property type="match status" value="1"/>
</dbReference>
<dbReference type="Gene3D" id="3.40.50.11270">
    <property type="match status" value="1"/>
</dbReference>
<dbReference type="Gene3D" id="3.40.1010.20">
    <property type="entry name" value="4-hydroxy-3-methylbut-2-enyl diphosphate reductase, catalytic domain"/>
    <property type="match status" value="2"/>
</dbReference>
<dbReference type="HAMAP" id="MF_00191">
    <property type="entry name" value="IspH"/>
    <property type="match status" value="1"/>
</dbReference>
<dbReference type="InterPro" id="IPR003451">
    <property type="entry name" value="LytB/IspH"/>
</dbReference>
<dbReference type="NCBIfam" id="TIGR00216">
    <property type="entry name" value="ispH_lytB"/>
    <property type="match status" value="1"/>
</dbReference>
<dbReference type="PANTHER" id="PTHR30426">
    <property type="entry name" value="4-HYDROXY-3-METHYLBUT-2-ENYL DIPHOSPHATE REDUCTASE"/>
    <property type="match status" value="1"/>
</dbReference>
<dbReference type="PANTHER" id="PTHR30426:SF0">
    <property type="entry name" value="4-HYDROXY-3-METHYLBUT-2-ENYL DIPHOSPHATE REDUCTASE"/>
    <property type="match status" value="1"/>
</dbReference>
<dbReference type="Pfam" id="PF02401">
    <property type="entry name" value="LYTB"/>
    <property type="match status" value="1"/>
</dbReference>
<organism>
    <name type="scientific">Dictyoglomus turgidum (strain DSM 6724 / Z-1310)</name>
    <dbReference type="NCBI Taxonomy" id="515635"/>
    <lineage>
        <taxon>Bacteria</taxon>
        <taxon>Pseudomonadati</taxon>
        <taxon>Dictyoglomota</taxon>
        <taxon>Dictyoglomia</taxon>
        <taxon>Dictyoglomales</taxon>
        <taxon>Dictyoglomaceae</taxon>
        <taxon>Dictyoglomus</taxon>
    </lineage>
</organism>
<comment type="function">
    <text evidence="1">Catalyzes the conversion of 1-hydroxy-2-methyl-2-(E)-butenyl 4-diphosphate (HMBPP) into a mixture of isopentenyl diphosphate (IPP) and dimethylallyl diphosphate (DMAPP). Acts in the terminal step of the DOXP/MEP pathway for isoprenoid precursor biosynthesis.</text>
</comment>
<comment type="catalytic activity">
    <reaction evidence="1">
        <text>isopentenyl diphosphate + 2 oxidized [2Fe-2S]-[ferredoxin] + H2O = (2E)-4-hydroxy-3-methylbut-2-enyl diphosphate + 2 reduced [2Fe-2S]-[ferredoxin] + 2 H(+)</text>
        <dbReference type="Rhea" id="RHEA:24488"/>
        <dbReference type="Rhea" id="RHEA-COMP:10000"/>
        <dbReference type="Rhea" id="RHEA-COMP:10001"/>
        <dbReference type="ChEBI" id="CHEBI:15377"/>
        <dbReference type="ChEBI" id="CHEBI:15378"/>
        <dbReference type="ChEBI" id="CHEBI:33737"/>
        <dbReference type="ChEBI" id="CHEBI:33738"/>
        <dbReference type="ChEBI" id="CHEBI:128753"/>
        <dbReference type="ChEBI" id="CHEBI:128769"/>
        <dbReference type="EC" id="1.17.7.4"/>
    </reaction>
</comment>
<comment type="catalytic activity">
    <reaction evidence="1">
        <text>dimethylallyl diphosphate + 2 oxidized [2Fe-2S]-[ferredoxin] + H2O = (2E)-4-hydroxy-3-methylbut-2-enyl diphosphate + 2 reduced [2Fe-2S]-[ferredoxin] + 2 H(+)</text>
        <dbReference type="Rhea" id="RHEA:24825"/>
        <dbReference type="Rhea" id="RHEA-COMP:10000"/>
        <dbReference type="Rhea" id="RHEA-COMP:10001"/>
        <dbReference type="ChEBI" id="CHEBI:15377"/>
        <dbReference type="ChEBI" id="CHEBI:15378"/>
        <dbReference type="ChEBI" id="CHEBI:33737"/>
        <dbReference type="ChEBI" id="CHEBI:33738"/>
        <dbReference type="ChEBI" id="CHEBI:57623"/>
        <dbReference type="ChEBI" id="CHEBI:128753"/>
        <dbReference type="EC" id="1.17.7.4"/>
    </reaction>
</comment>
<comment type="cofactor">
    <cofactor evidence="1">
        <name>[4Fe-4S] cluster</name>
        <dbReference type="ChEBI" id="CHEBI:49883"/>
    </cofactor>
    <text evidence="1">Binds 1 [4Fe-4S] cluster per subunit.</text>
</comment>
<comment type="pathway">
    <text evidence="1">Isoprenoid biosynthesis; dimethylallyl diphosphate biosynthesis; dimethylallyl diphosphate from (2E)-4-hydroxy-3-methylbutenyl diphosphate: step 1/1.</text>
</comment>
<comment type="pathway">
    <text evidence="1">Isoprenoid biosynthesis; isopentenyl diphosphate biosynthesis via DXP pathway; isopentenyl diphosphate from 1-deoxy-D-xylulose 5-phosphate: step 6/6.</text>
</comment>
<comment type="similarity">
    <text evidence="1">Belongs to the IspH family.</text>
</comment>
<name>ISPH_DICTD</name>
<sequence length="283" mass="31885">MKVYIATPYGFCSGVKKSISLAEKILSLKGEVYTLGALVHNPKVIEELSKKGIKVLGKDEIVEGKALIVRAHGLPQRDIDFYKSLGNEIYDATCPLVKKVQVLAEYLKNNKYKVIIIGEKNHPEVIGILSYTDNQGIVIEYESDIEKVEYYPKIGIVFQTTQSFDNAIQKVNLIMNKGKEIRIFNTICPETIERQEKAKKLSKIVDVALVLGGKNSANTRRLYITLSLKVPTYHIENLEEIDKNWFKEDSKVGIITGTSTPNNFVEEVLALLKSLYPLEIHLV</sequence>
<gene>
    <name evidence="1" type="primary">ispH</name>
    <name type="ordered locus">Dtur_1158</name>
</gene>
<accession>B8E2T7</accession>
<keyword id="KW-0004">4Fe-4S</keyword>
<keyword id="KW-0408">Iron</keyword>
<keyword id="KW-0411">Iron-sulfur</keyword>
<keyword id="KW-0414">Isoprene biosynthesis</keyword>
<keyword id="KW-0479">Metal-binding</keyword>
<keyword id="KW-0560">Oxidoreductase</keyword>
<keyword id="KW-1185">Reference proteome</keyword>
<reference key="1">
    <citation type="journal article" date="2016" name="Front. Microbiol.">
        <title>The complete genome sequence of hyperthermophile Dictyoglomus turgidum DSM 6724 reveals a specialized carbohydrate fermentor.</title>
        <authorList>
            <person name="Brumm P.J."/>
            <person name="Gowda K."/>
            <person name="Robb F.T."/>
            <person name="Mead D.A."/>
        </authorList>
    </citation>
    <scope>NUCLEOTIDE SEQUENCE [LARGE SCALE GENOMIC DNA]</scope>
    <source>
        <strain>DSM 6724 / Z-1310</strain>
    </source>
</reference>
<proteinExistence type="inferred from homology"/>
<evidence type="ECO:0000255" key="1">
    <source>
        <dbReference type="HAMAP-Rule" id="MF_00191"/>
    </source>
</evidence>
<protein>
    <recommendedName>
        <fullName evidence="1">4-hydroxy-3-methylbut-2-enyl diphosphate reductase</fullName>
        <shortName evidence="1">HMBPP reductase</shortName>
        <ecNumber evidence="1">1.17.7.4</ecNumber>
    </recommendedName>
</protein>